<keyword id="KW-0027">Amidation</keyword>
<keyword id="KW-0903">Direct protein sequencing</keyword>
<keyword id="KW-0527">Neuropeptide</keyword>
<keyword id="KW-0964">Secreted</keyword>
<feature type="peptide" id="PRO_0000421594" description="Pyrokinin-3" evidence="3">
    <location>
        <begin position="1"/>
        <end position="8"/>
    </location>
</feature>
<feature type="modified residue" description="Leucine amide" evidence="3">
    <location>
        <position position="8"/>
    </location>
</feature>
<comment type="function">
    <text evidence="1">Myoactive.</text>
</comment>
<comment type="subcellular location">
    <subcellularLocation>
        <location evidence="6">Secreted</location>
    </subcellularLocation>
</comment>
<comment type="similarity">
    <text evidence="2">Belongs to the pyrokinin family.</text>
</comment>
<organism>
    <name type="scientific">Hemilobophasma montaguense</name>
    <name type="common">Gladiator</name>
    <name type="synonym">Heel-walker</name>
    <dbReference type="NCBI Taxonomy" id="253130"/>
    <lineage>
        <taxon>Eukaryota</taxon>
        <taxon>Metazoa</taxon>
        <taxon>Ecdysozoa</taxon>
        <taxon>Arthropoda</taxon>
        <taxon>Hexapoda</taxon>
        <taxon>Insecta</taxon>
        <taxon>Pterygota</taxon>
        <taxon>Neoptera</taxon>
        <taxon>Polyneoptera</taxon>
        <taxon>Mantophasmatodea</taxon>
        <taxon>Austrophasmatidae</taxon>
        <taxon>Hemilobophasma</taxon>
    </lineage>
</organism>
<name>PPK3_HEMMO</name>
<dbReference type="GO" id="GO:0005576">
    <property type="term" value="C:extracellular region"/>
    <property type="evidence" value="ECO:0007669"/>
    <property type="project" value="UniProtKB-SubCell"/>
</dbReference>
<dbReference type="GO" id="GO:0007218">
    <property type="term" value="P:neuropeptide signaling pathway"/>
    <property type="evidence" value="ECO:0007669"/>
    <property type="project" value="UniProtKB-KW"/>
</dbReference>
<dbReference type="PROSITE" id="PS00539">
    <property type="entry name" value="PYROKININ"/>
    <property type="match status" value="1"/>
</dbReference>
<protein>
    <recommendedName>
        <fullName evidence="4">Pyrokinin-3</fullName>
        <shortName evidence="4">PK-3</shortName>
    </recommendedName>
    <alternativeName>
        <fullName evidence="1">FXPRL-amide</fullName>
    </alternativeName>
</protein>
<accession>B3A0D2</accession>
<proteinExistence type="evidence at protein level"/>
<reference evidence="5" key="1">
    <citation type="journal article" date="2012" name="Syst. Biol.">
        <title>Peptidomics-based phylogeny and biogeography of Mantophasmatodea (Hexapoda).</title>
        <authorList>
            <person name="Predel R."/>
            <person name="Neupert S."/>
            <person name="Huetteroth W."/>
            <person name="Kahnt J."/>
            <person name="Waidelich D."/>
            <person name="Roth S."/>
        </authorList>
    </citation>
    <scope>PROTEIN SEQUENCE</scope>
    <scope>AMIDATION AT LEU-8</scope>
    <source>
        <tissue evidence="3">Corpora cardiaca</tissue>
    </source>
</reference>
<sequence length="8" mass="928">DPPFSPRL</sequence>
<evidence type="ECO:0000250" key="1">
    <source>
        <dbReference type="UniProtKB" id="P82619"/>
    </source>
</evidence>
<evidence type="ECO:0000255" key="2"/>
<evidence type="ECO:0000269" key="3">
    <source>
    </source>
</evidence>
<evidence type="ECO:0000303" key="4">
    <source>
    </source>
</evidence>
<evidence type="ECO:0000305" key="5"/>
<evidence type="ECO:0000305" key="6">
    <source>
    </source>
</evidence>